<keyword id="KW-0001">2Fe-2S</keyword>
<keyword id="KW-0963">Cytoplasm</keyword>
<keyword id="KW-0408">Iron</keyword>
<keyword id="KW-0411">Iron-sulfur</keyword>
<keyword id="KW-0479">Metal-binding</keyword>
<keyword id="KW-0560">Oxidoreductase</keyword>
<keyword id="KW-1185">Reference proteome</keyword>
<proteinExistence type="inferred from homology"/>
<comment type="function">
    <text evidence="1">Catalyzes the reduction of hydroxylamine to form NH(3) and H(2)O.</text>
</comment>
<comment type="catalytic activity">
    <reaction evidence="1">
        <text>A + NH4(+) + H2O = hydroxylamine + AH2 + H(+)</text>
        <dbReference type="Rhea" id="RHEA:22052"/>
        <dbReference type="ChEBI" id="CHEBI:13193"/>
        <dbReference type="ChEBI" id="CHEBI:15377"/>
        <dbReference type="ChEBI" id="CHEBI:15378"/>
        <dbReference type="ChEBI" id="CHEBI:15429"/>
        <dbReference type="ChEBI" id="CHEBI:17499"/>
        <dbReference type="ChEBI" id="CHEBI:28938"/>
        <dbReference type="EC" id="1.7.99.1"/>
    </reaction>
</comment>
<comment type="cofactor">
    <cofactor evidence="1">
        <name>[2Fe-2S] cluster</name>
        <dbReference type="ChEBI" id="CHEBI:190135"/>
    </cofactor>
    <text evidence="1">Binds 1 [2Fe-2S] cluster.</text>
</comment>
<comment type="cofactor">
    <cofactor evidence="1">
        <name>hybrid [4Fe-2O-2S] cluster</name>
        <dbReference type="ChEBI" id="CHEBI:60519"/>
    </cofactor>
    <text evidence="1">Binds 1 hybrid [4Fe-2O-2S] cluster.</text>
</comment>
<comment type="subcellular location">
    <subcellularLocation>
        <location evidence="1">Cytoplasm</location>
    </subcellularLocation>
</comment>
<comment type="similarity">
    <text evidence="1">Belongs to the HCP family.</text>
</comment>
<comment type="sequence caution" evidence="2">
    <conflict type="erroneous initiation">
        <sequence resource="EMBL-CDS" id="AAG55255"/>
    </conflict>
    <text>Extended N-terminus.</text>
</comment>
<organism>
    <name type="scientific">Escherichia coli O157:H7</name>
    <dbReference type="NCBI Taxonomy" id="83334"/>
    <lineage>
        <taxon>Bacteria</taxon>
        <taxon>Pseudomonadati</taxon>
        <taxon>Pseudomonadota</taxon>
        <taxon>Gammaproteobacteria</taxon>
        <taxon>Enterobacterales</taxon>
        <taxon>Enterobacteriaceae</taxon>
        <taxon>Escherichia</taxon>
    </lineage>
</organism>
<gene>
    <name evidence="1" type="primary">hcp</name>
    <name type="ordered locus">Z1107</name>
    <name type="ordered locus">ECs0959</name>
</gene>
<feature type="chain" id="PRO_0000151676" description="Hydroxylamine reductase">
    <location>
        <begin position="1"/>
        <end position="550"/>
    </location>
</feature>
<feature type="binding site" evidence="1">
    <location>
        <position position="3"/>
    </location>
    <ligand>
        <name>[2Fe-2S] cluster</name>
        <dbReference type="ChEBI" id="CHEBI:190135"/>
    </ligand>
</feature>
<feature type="binding site" evidence="1">
    <location>
        <position position="6"/>
    </location>
    <ligand>
        <name>[2Fe-2S] cluster</name>
        <dbReference type="ChEBI" id="CHEBI:190135"/>
    </ligand>
</feature>
<feature type="binding site" evidence="1">
    <location>
        <position position="18"/>
    </location>
    <ligand>
        <name>[2Fe-2S] cluster</name>
        <dbReference type="ChEBI" id="CHEBI:190135"/>
    </ligand>
</feature>
<feature type="binding site" evidence="1">
    <location>
        <position position="25"/>
    </location>
    <ligand>
        <name>[2Fe-2S] cluster</name>
        <dbReference type="ChEBI" id="CHEBI:190135"/>
    </ligand>
</feature>
<feature type="binding site" evidence="1">
    <location>
        <position position="249"/>
    </location>
    <ligand>
        <name>hybrid [4Fe-2O-2S] cluster</name>
        <dbReference type="ChEBI" id="CHEBI:60519"/>
    </ligand>
</feature>
<feature type="binding site" evidence="1">
    <location>
        <position position="273"/>
    </location>
    <ligand>
        <name>hybrid [4Fe-2O-2S] cluster</name>
        <dbReference type="ChEBI" id="CHEBI:60519"/>
    </ligand>
</feature>
<feature type="binding site" evidence="1">
    <location>
        <position position="317"/>
    </location>
    <ligand>
        <name>hybrid [4Fe-2O-2S] cluster</name>
        <dbReference type="ChEBI" id="CHEBI:60519"/>
    </ligand>
</feature>
<feature type="binding site" description="via persulfide group" evidence="1">
    <location>
        <position position="405"/>
    </location>
    <ligand>
        <name>hybrid [4Fe-2O-2S] cluster</name>
        <dbReference type="ChEBI" id="CHEBI:60519"/>
    </ligand>
</feature>
<feature type="binding site" evidence="1">
    <location>
        <position position="433"/>
    </location>
    <ligand>
        <name>hybrid [4Fe-2O-2S] cluster</name>
        <dbReference type="ChEBI" id="CHEBI:60519"/>
    </ligand>
</feature>
<feature type="binding site" evidence="1">
    <location>
        <position position="458"/>
    </location>
    <ligand>
        <name>hybrid [4Fe-2O-2S] cluster</name>
        <dbReference type="ChEBI" id="CHEBI:60519"/>
    </ligand>
</feature>
<feature type="binding site" evidence="1">
    <location>
        <position position="492"/>
    </location>
    <ligand>
        <name>hybrid [4Fe-2O-2S] cluster</name>
        <dbReference type="ChEBI" id="CHEBI:60519"/>
    </ligand>
</feature>
<feature type="binding site" evidence="1">
    <location>
        <position position="494"/>
    </location>
    <ligand>
        <name>hybrid [4Fe-2O-2S] cluster</name>
        <dbReference type="ChEBI" id="CHEBI:60519"/>
    </ligand>
</feature>
<feature type="modified residue" description="Cysteine persulfide" evidence="1">
    <location>
        <position position="405"/>
    </location>
</feature>
<accession>Q8X6L0</accession>
<evidence type="ECO:0000255" key="1">
    <source>
        <dbReference type="HAMAP-Rule" id="MF_00069"/>
    </source>
</evidence>
<evidence type="ECO:0000305" key="2"/>
<protein>
    <recommendedName>
        <fullName evidence="1">Hydroxylamine reductase</fullName>
        <ecNumber evidence="1">1.7.99.1</ecNumber>
    </recommendedName>
    <alternativeName>
        <fullName evidence="1">Hybrid-cluster protein</fullName>
        <shortName evidence="1">HCP</shortName>
    </alternativeName>
    <alternativeName>
        <fullName evidence="1">Prismane protein</fullName>
    </alternativeName>
</protein>
<dbReference type="EC" id="1.7.99.1" evidence="1"/>
<dbReference type="EMBL" id="AE005174">
    <property type="protein sequence ID" value="AAG55255.1"/>
    <property type="status" value="ALT_INIT"/>
    <property type="molecule type" value="Genomic_DNA"/>
</dbReference>
<dbReference type="EMBL" id="BA000007">
    <property type="protein sequence ID" value="BAB34382.2"/>
    <property type="molecule type" value="Genomic_DNA"/>
</dbReference>
<dbReference type="PIR" id="C85599">
    <property type="entry name" value="C85599"/>
</dbReference>
<dbReference type="PIR" id="G90748">
    <property type="entry name" value="G90748"/>
</dbReference>
<dbReference type="RefSeq" id="NP_308986.2">
    <property type="nucleotide sequence ID" value="NC_002695.1"/>
</dbReference>
<dbReference type="RefSeq" id="WP_000458817.1">
    <property type="nucleotide sequence ID" value="NZ_VOAI01000006.1"/>
</dbReference>
<dbReference type="SMR" id="Q8X6L0"/>
<dbReference type="STRING" id="155864.Z1107"/>
<dbReference type="GeneID" id="75202475"/>
<dbReference type="GeneID" id="917700"/>
<dbReference type="KEGG" id="ece:Z1107"/>
<dbReference type="KEGG" id="ecs:ECs_0959"/>
<dbReference type="PATRIC" id="fig|386585.9.peg.1075"/>
<dbReference type="eggNOG" id="COG1151">
    <property type="taxonomic scope" value="Bacteria"/>
</dbReference>
<dbReference type="HOGENOM" id="CLU_038344_2_0_6"/>
<dbReference type="OMA" id="AYAQGMC"/>
<dbReference type="Proteomes" id="UP000000558">
    <property type="component" value="Chromosome"/>
</dbReference>
<dbReference type="Proteomes" id="UP000002519">
    <property type="component" value="Chromosome"/>
</dbReference>
<dbReference type="GO" id="GO:0005737">
    <property type="term" value="C:cytoplasm"/>
    <property type="evidence" value="ECO:0007669"/>
    <property type="project" value="UniProtKB-SubCell"/>
</dbReference>
<dbReference type="GO" id="GO:0051537">
    <property type="term" value="F:2 iron, 2 sulfur cluster binding"/>
    <property type="evidence" value="ECO:0007669"/>
    <property type="project" value="UniProtKB-KW"/>
</dbReference>
<dbReference type="GO" id="GO:0050418">
    <property type="term" value="F:hydroxylamine reductase activity"/>
    <property type="evidence" value="ECO:0007669"/>
    <property type="project" value="UniProtKB-UniRule"/>
</dbReference>
<dbReference type="GO" id="GO:0046872">
    <property type="term" value="F:metal ion binding"/>
    <property type="evidence" value="ECO:0007669"/>
    <property type="project" value="UniProtKB-KW"/>
</dbReference>
<dbReference type="GO" id="GO:0004601">
    <property type="term" value="F:peroxidase activity"/>
    <property type="evidence" value="ECO:0007669"/>
    <property type="project" value="TreeGrafter"/>
</dbReference>
<dbReference type="GO" id="GO:0042542">
    <property type="term" value="P:response to hydrogen peroxide"/>
    <property type="evidence" value="ECO:0007669"/>
    <property type="project" value="TreeGrafter"/>
</dbReference>
<dbReference type="CDD" id="cd01914">
    <property type="entry name" value="HCP"/>
    <property type="match status" value="1"/>
</dbReference>
<dbReference type="FunFam" id="1.20.1270.20:FF:000001">
    <property type="entry name" value="Hydroxylamine reductase"/>
    <property type="match status" value="1"/>
</dbReference>
<dbReference type="FunFam" id="1.20.1270.20:FF:000002">
    <property type="entry name" value="Hydroxylamine reductase"/>
    <property type="match status" value="1"/>
</dbReference>
<dbReference type="FunFam" id="3.40.50.2030:FF:000001">
    <property type="entry name" value="Hydroxylamine reductase"/>
    <property type="match status" value="1"/>
</dbReference>
<dbReference type="FunFam" id="3.40.50.2030:FF:000002">
    <property type="entry name" value="Hydroxylamine reductase"/>
    <property type="match status" value="1"/>
</dbReference>
<dbReference type="Gene3D" id="1.20.1270.20">
    <property type="match status" value="2"/>
</dbReference>
<dbReference type="Gene3D" id="3.40.50.2030">
    <property type="match status" value="2"/>
</dbReference>
<dbReference type="HAMAP" id="MF_00069">
    <property type="entry name" value="Hydroxylam_reduct"/>
    <property type="match status" value="1"/>
</dbReference>
<dbReference type="InterPro" id="IPR004137">
    <property type="entry name" value="HCP/CODH"/>
</dbReference>
<dbReference type="InterPro" id="IPR010048">
    <property type="entry name" value="Hydroxylam_reduct"/>
</dbReference>
<dbReference type="InterPro" id="IPR016099">
    <property type="entry name" value="Prismane-like_a/b-sand"/>
</dbReference>
<dbReference type="InterPro" id="IPR011254">
    <property type="entry name" value="Prismane-like_sf"/>
</dbReference>
<dbReference type="InterPro" id="IPR016100">
    <property type="entry name" value="Prismane_a-bundle"/>
</dbReference>
<dbReference type="NCBIfam" id="TIGR01703">
    <property type="entry name" value="hybrid_clust"/>
    <property type="match status" value="1"/>
</dbReference>
<dbReference type="NCBIfam" id="NF003658">
    <property type="entry name" value="PRK05290.1"/>
    <property type="match status" value="1"/>
</dbReference>
<dbReference type="PANTHER" id="PTHR30109">
    <property type="entry name" value="HYDROXYLAMINE REDUCTASE"/>
    <property type="match status" value="1"/>
</dbReference>
<dbReference type="PANTHER" id="PTHR30109:SF0">
    <property type="entry name" value="HYDROXYLAMINE REDUCTASE"/>
    <property type="match status" value="1"/>
</dbReference>
<dbReference type="Pfam" id="PF03063">
    <property type="entry name" value="Prismane"/>
    <property type="match status" value="1"/>
</dbReference>
<dbReference type="PIRSF" id="PIRSF000076">
    <property type="entry name" value="HCP"/>
    <property type="match status" value="1"/>
</dbReference>
<dbReference type="SUPFAM" id="SSF56821">
    <property type="entry name" value="Prismane protein-like"/>
    <property type="match status" value="1"/>
</dbReference>
<reference key="1">
    <citation type="journal article" date="2001" name="Nature">
        <title>Genome sequence of enterohaemorrhagic Escherichia coli O157:H7.</title>
        <authorList>
            <person name="Perna N.T."/>
            <person name="Plunkett G. III"/>
            <person name="Burland V."/>
            <person name="Mau B."/>
            <person name="Glasner J.D."/>
            <person name="Rose D.J."/>
            <person name="Mayhew G.F."/>
            <person name="Evans P.S."/>
            <person name="Gregor J."/>
            <person name="Kirkpatrick H.A."/>
            <person name="Posfai G."/>
            <person name="Hackett J."/>
            <person name="Klink S."/>
            <person name="Boutin A."/>
            <person name="Shao Y."/>
            <person name="Miller L."/>
            <person name="Grotbeck E.J."/>
            <person name="Davis N.W."/>
            <person name="Lim A."/>
            <person name="Dimalanta E.T."/>
            <person name="Potamousis K."/>
            <person name="Apodaca J."/>
            <person name="Anantharaman T.S."/>
            <person name="Lin J."/>
            <person name="Yen G."/>
            <person name="Schwartz D.C."/>
            <person name="Welch R.A."/>
            <person name="Blattner F.R."/>
        </authorList>
    </citation>
    <scope>NUCLEOTIDE SEQUENCE [LARGE SCALE GENOMIC DNA]</scope>
    <source>
        <strain>O157:H7 / EDL933 / ATCC 700927 / EHEC</strain>
    </source>
</reference>
<reference key="2">
    <citation type="journal article" date="2001" name="DNA Res.">
        <title>Complete genome sequence of enterohemorrhagic Escherichia coli O157:H7 and genomic comparison with a laboratory strain K-12.</title>
        <authorList>
            <person name="Hayashi T."/>
            <person name="Makino K."/>
            <person name="Ohnishi M."/>
            <person name="Kurokawa K."/>
            <person name="Ishii K."/>
            <person name="Yokoyama K."/>
            <person name="Han C.-G."/>
            <person name="Ohtsubo E."/>
            <person name="Nakayama K."/>
            <person name="Murata T."/>
            <person name="Tanaka M."/>
            <person name="Tobe T."/>
            <person name="Iida T."/>
            <person name="Takami H."/>
            <person name="Honda T."/>
            <person name="Sasakawa C."/>
            <person name="Ogasawara N."/>
            <person name="Yasunaga T."/>
            <person name="Kuhara S."/>
            <person name="Shiba T."/>
            <person name="Hattori M."/>
            <person name="Shinagawa H."/>
        </authorList>
    </citation>
    <scope>NUCLEOTIDE SEQUENCE [LARGE SCALE GENOMIC DNA]</scope>
    <source>
        <strain>O157:H7 / Sakai / RIMD 0509952 / EHEC</strain>
    </source>
</reference>
<sequence length="550" mass="60048">MFCVQCEQTIRTPAGNGCSYAQGMCGKTAETSDLQDLLIAALQGLSAWAVKAREYGIINHDVDSFAPRAFFSTLTNVNFDSPRIVGYAREAIALREALKAQCLAVDANARVDNPMADLQLVSDDLGELQRQAAEFTPNKDKAAIGENILGLRLLCLYGLKGAAAYMEHAHVLGQYDNDIYAQYHKIMAWLGTWPADMNALLECSMEIGQMNFKVMSILDAGETGKYGHPTPTQVNVKATAGKCILISGHDLKDLYNLLEQTEGTGVNVYTHGEMLPAHGYPELRKFKHLVGNYGSGWQNQQVEFARFPGPIVMTSNCIIDPTVGAYDDRIWTRSIVGWPGVRHLDGEDFSAVIAQAQQMAGFPYSEIPHLITVGFGRQTLLGAADTLIDLVSREKLRHIFLLGGCDGARGERHYFTDFATSVPDDCLILTLACGKYRFNKLEFGDIEGLPRLVDAGQCNDAYSAIILAVTLAEKLGCGVNDLPLSLVLSWFEQKAIVILLTLLSLGVKNIVTGPTAPGFLTPDLLAVLNEKFGLRSITTVEEDMKQLLSA</sequence>
<name>HCP_ECO57</name>